<name>CCME_ACTP7</name>
<organism>
    <name type="scientific">Actinobacillus pleuropneumoniae serotype 7 (strain AP76)</name>
    <dbReference type="NCBI Taxonomy" id="537457"/>
    <lineage>
        <taxon>Bacteria</taxon>
        <taxon>Pseudomonadati</taxon>
        <taxon>Pseudomonadota</taxon>
        <taxon>Gammaproteobacteria</taxon>
        <taxon>Pasteurellales</taxon>
        <taxon>Pasteurellaceae</taxon>
        <taxon>Actinobacillus</taxon>
    </lineage>
</organism>
<protein>
    <recommendedName>
        <fullName evidence="1">Cytochrome c-type biogenesis protein CcmE</fullName>
    </recommendedName>
    <alternativeName>
        <fullName evidence="1">Cytochrome c maturation protein E</fullName>
    </alternativeName>
    <alternativeName>
        <fullName evidence="1">Heme chaperone CcmE</fullName>
    </alternativeName>
</protein>
<dbReference type="EMBL" id="CP001091">
    <property type="protein sequence ID" value="ACE62071.1"/>
    <property type="molecule type" value="Genomic_DNA"/>
</dbReference>
<dbReference type="RefSeq" id="WP_005601970.1">
    <property type="nucleotide sequence ID" value="NC_010939.1"/>
</dbReference>
<dbReference type="SMR" id="B3GYE7"/>
<dbReference type="GeneID" id="48599622"/>
<dbReference type="KEGG" id="apa:APP7_1419"/>
<dbReference type="HOGENOM" id="CLU_079503_1_0_6"/>
<dbReference type="Proteomes" id="UP000001226">
    <property type="component" value="Chromosome"/>
</dbReference>
<dbReference type="GO" id="GO:0005886">
    <property type="term" value="C:plasma membrane"/>
    <property type="evidence" value="ECO:0007669"/>
    <property type="project" value="UniProtKB-SubCell"/>
</dbReference>
<dbReference type="GO" id="GO:0020037">
    <property type="term" value="F:heme binding"/>
    <property type="evidence" value="ECO:0007669"/>
    <property type="project" value="InterPro"/>
</dbReference>
<dbReference type="GO" id="GO:0046872">
    <property type="term" value="F:metal ion binding"/>
    <property type="evidence" value="ECO:0007669"/>
    <property type="project" value="UniProtKB-KW"/>
</dbReference>
<dbReference type="GO" id="GO:0017004">
    <property type="term" value="P:cytochrome complex assembly"/>
    <property type="evidence" value="ECO:0007669"/>
    <property type="project" value="UniProtKB-KW"/>
</dbReference>
<dbReference type="FunFam" id="2.40.50.140:FF:000104">
    <property type="entry name" value="Cytochrome c-type biogenesis protein CcmE"/>
    <property type="match status" value="1"/>
</dbReference>
<dbReference type="Gene3D" id="2.40.50.140">
    <property type="entry name" value="Nucleic acid-binding proteins"/>
    <property type="match status" value="1"/>
</dbReference>
<dbReference type="HAMAP" id="MF_01959">
    <property type="entry name" value="CcmE"/>
    <property type="match status" value="1"/>
</dbReference>
<dbReference type="InterPro" id="IPR004329">
    <property type="entry name" value="CcmE"/>
</dbReference>
<dbReference type="InterPro" id="IPR036127">
    <property type="entry name" value="CcmE-like_sf"/>
</dbReference>
<dbReference type="InterPro" id="IPR012340">
    <property type="entry name" value="NA-bd_OB-fold"/>
</dbReference>
<dbReference type="NCBIfam" id="NF009638">
    <property type="entry name" value="PRK13165.1"/>
    <property type="match status" value="1"/>
</dbReference>
<dbReference type="NCBIfam" id="NF009727">
    <property type="entry name" value="PRK13254.1-1"/>
    <property type="match status" value="1"/>
</dbReference>
<dbReference type="NCBIfam" id="NF009729">
    <property type="entry name" value="PRK13254.1-3"/>
    <property type="match status" value="1"/>
</dbReference>
<dbReference type="PANTHER" id="PTHR34128">
    <property type="entry name" value="CYTOCHROME C-TYPE BIOGENESIS PROTEIN CCME HOMOLOG, MITOCHONDRIAL"/>
    <property type="match status" value="1"/>
</dbReference>
<dbReference type="PANTHER" id="PTHR34128:SF2">
    <property type="entry name" value="CYTOCHROME C-TYPE BIOGENESIS PROTEIN CCME HOMOLOG, MITOCHONDRIAL"/>
    <property type="match status" value="1"/>
</dbReference>
<dbReference type="Pfam" id="PF03100">
    <property type="entry name" value="CcmE"/>
    <property type="match status" value="1"/>
</dbReference>
<dbReference type="SUPFAM" id="SSF82093">
    <property type="entry name" value="Heme chaperone CcmE"/>
    <property type="match status" value="1"/>
</dbReference>
<gene>
    <name evidence="1" type="primary">ccmE</name>
    <name evidence="1" type="synonym">cycJ</name>
    <name type="ordered locus">APP7_1419</name>
</gene>
<evidence type="ECO:0000255" key="1">
    <source>
        <dbReference type="HAMAP-Rule" id="MF_01959"/>
    </source>
</evidence>
<evidence type="ECO:0000256" key="2">
    <source>
        <dbReference type="SAM" id="MobiDB-lite"/>
    </source>
</evidence>
<reference key="1">
    <citation type="submission" date="2008-06" db="EMBL/GenBank/DDBJ databases">
        <title>Genome and proteome analysis of A. pleuropneumoniae serotype 7.</title>
        <authorList>
            <person name="Linke B."/>
            <person name="Buettner F."/>
            <person name="Martinez-Arias R."/>
            <person name="Goesmann A."/>
            <person name="Baltes N."/>
            <person name="Tegetmeyer H."/>
            <person name="Singh M."/>
            <person name="Gerlach G.F."/>
        </authorList>
    </citation>
    <scope>NUCLEOTIDE SEQUENCE [LARGE SCALE GENOMIC DNA]</scope>
    <source>
        <strain>AP76</strain>
    </source>
</reference>
<keyword id="KW-0997">Cell inner membrane</keyword>
<keyword id="KW-1003">Cell membrane</keyword>
<keyword id="KW-0201">Cytochrome c-type biogenesis</keyword>
<keyword id="KW-0349">Heme</keyword>
<keyword id="KW-0408">Iron</keyword>
<keyword id="KW-0472">Membrane</keyword>
<keyword id="KW-0479">Metal-binding</keyword>
<keyword id="KW-0735">Signal-anchor</keyword>
<keyword id="KW-0812">Transmembrane</keyword>
<keyword id="KW-1133">Transmembrane helix</keyword>
<accession>B3GYE7</accession>
<sequence>MNPRRKSRLKVVVSIIFGVAVAAGLTLYALSQNIDLFYTPSEIVNGKNDDPDQKPEVGQRIRVGGMVVEGSVKRDDKTLKVEFEANDIGPSITVEYEGILPDLFREGQGIVAQGVLIEPTRLKATEVLAKHDENYMPPELGDKLKEQHGAAGISEADLKGTSARDKAEIERTLKTLQGEAN</sequence>
<proteinExistence type="inferred from homology"/>
<feature type="chain" id="PRO_1000188997" description="Cytochrome c-type biogenesis protein CcmE">
    <location>
        <begin position="1"/>
        <end position="181"/>
    </location>
</feature>
<feature type="topological domain" description="Cytoplasmic" evidence="1">
    <location>
        <begin position="1"/>
        <end position="8"/>
    </location>
</feature>
<feature type="transmembrane region" description="Helical; Signal-anchor for type II membrane protein" evidence="1">
    <location>
        <begin position="9"/>
        <end position="29"/>
    </location>
</feature>
<feature type="topological domain" description="Periplasmic" evidence="1">
    <location>
        <begin position="30"/>
        <end position="181"/>
    </location>
</feature>
<feature type="region of interest" description="Disordered" evidence="2">
    <location>
        <begin position="135"/>
        <end position="166"/>
    </location>
</feature>
<feature type="compositionally biased region" description="Basic and acidic residues" evidence="2">
    <location>
        <begin position="135"/>
        <end position="148"/>
    </location>
</feature>
<feature type="compositionally biased region" description="Basic and acidic residues" evidence="2">
    <location>
        <begin position="156"/>
        <end position="166"/>
    </location>
</feature>
<feature type="binding site" description="covalent" evidence="1">
    <location>
        <position position="131"/>
    </location>
    <ligand>
        <name>heme</name>
        <dbReference type="ChEBI" id="CHEBI:30413"/>
    </ligand>
</feature>
<feature type="binding site" description="axial binding residue" evidence="1">
    <location>
        <position position="135"/>
    </location>
    <ligand>
        <name>heme</name>
        <dbReference type="ChEBI" id="CHEBI:30413"/>
    </ligand>
    <ligandPart>
        <name>Fe</name>
        <dbReference type="ChEBI" id="CHEBI:18248"/>
    </ligandPart>
</feature>
<comment type="function">
    <text evidence="1">Heme chaperone required for the biogenesis of c-type cytochromes. Transiently binds heme delivered by CcmC and transfers the heme to apo-cytochromes in a process facilitated by CcmF and CcmH.</text>
</comment>
<comment type="subcellular location">
    <subcellularLocation>
        <location evidence="1">Cell inner membrane</location>
        <topology evidence="1">Single-pass type II membrane protein</topology>
        <orientation evidence="1">Periplasmic side</orientation>
    </subcellularLocation>
</comment>
<comment type="similarity">
    <text evidence="1">Belongs to the CcmE/CycJ family.</text>
</comment>